<comment type="function">
    <text evidence="1">The RuvA-RuvB-RuvC complex processes Holliday junction (HJ) DNA during genetic recombination and DNA repair. Endonuclease that resolves HJ intermediates. Cleaves cruciform DNA by making single-stranded nicks across the HJ at symmetrical positions within the homologous arms, yielding a 5'-phosphate and a 3'-hydroxyl group; requires a central core of homology in the junction. The consensus cleavage sequence is 5'-(A/T)TT(C/G)-3'. Cleavage occurs on the 3'-side of the TT dinucleotide at the point of strand exchange. HJ branch migration catalyzed by RuvA-RuvB allows RuvC to scan DNA until it finds its consensus sequence, where it cleaves and resolves the cruciform DNA.</text>
</comment>
<comment type="catalytic activity">
    <reaction evidence="1">
        <text>Endonucleolytic cleavage at a junction such as a reciprocal single-stranded crossover between two homologous DNA duplexes (Holliday junction).</text>
        <dbReference type="EC" id="3.1.21.10"/>
    </reaction>
</comment>
<comment type="cofactor">
    <cofactor evidence="1">
        <name>Mg(2+)</name>
        <dbReference type="ChEBI" id="CHEBI:18420"/>
    </cofactor>
    <text evidence="1">Binds 2 Mg(2+) ion per subunit.</text>
</comment>
<comment type="subunit">
    <text evidence="1">Homodimer which binds Holliday junction (HJ) DNA. The HJ becomes 2-fold symmetrical on binding to RuvC with unstacked arms; it has a different conformation from HJ DNA in complex with RuvA. In the full resolvosome a probable DNA-RuvA(4)-RuvB(12)-RuvC(2) complex forms which resolves the HJ.</text>
</comment>
<comment type="subcellular location">
    <subcellularLocation>
        <location evidence="1">Cytoplasm</location>
    </subcellularLocation>
</comment>
<comment type="similarity">
    <text evidence="1">Belongs to the RuvC family.</text>
</comment>
<evidence type="ECO:0000255" key="1">
    <source>
        <dbReference type="HAMAP-Rule" id="MF_00034"/>
    </source>
</evidence>
<gene>
    <name evidence="1" type="primary">ruvC</name>
    <name type="ordered locus">MS0711</name>
</gene>
<reference key="1">
    <citation type="journal article" date="2004" name="Nat. Biotechnol.">
        <title>The genome sequence of the capnophilic rumen bacterium Mannheimia succiniciproducens.</title>
        <authorList>
            <person name="Hong S.H."/>
            <person name="Kim J.S."/>
            <person name="Lee S.Y."/>
            <person name="In Y.H."/>
            <person name="Choi S.S."/>
            <person name="Rih J.-K."/>
            <person name="Kim C.H."/>
            <person name="Jeong H."/>
            <person name="Hur C.G."/>
            <person name="Kim J.J."/>
        </authorList>
    </citation>
    <scope>NUCLEOTIDE SEQUENCE [LARGE SCALE GENOMIC DNA]</scope>
    <source>
        <strain>KCTC 0769BP / MBEL55E</strain>
    </source>
</reference>
<proteinExistence type="inferred from homology"/>
<feature type="chain" id="PRO_0000183108" description="Crossover junction endodeoxyribonuclease RuvC">
    <location>
        <begin position="1"/>
        <end position="199"/>
    </location>
</feature>
<feature type="active site" evidence="1">
    <location>
        <position position="17"/>
    </location>
</feature>
<feature type="active site" evidence="1">
    <location>
        <position position="76"/>
    </location>
</feature>
<feature type="active site" evidence="1">
    <location>
        <position position="148"/>
    </location>
</feature>
<feature type="binding site" evidence="1">
    <location>
        <position position="17"/>
    </location>
    <ligand>
        <name>Mg(2+)</name>
        <dbReference type="ChEBI" id="CHEBI:18420"/>
        <label>1</label>
    </ligand>
</feature>
<feature type="binding site" evidence="1">
    <location>
        <position position="76"/>
    </location>
    <ligand>
        <name>Mg(2+)</name>
        <dbReference type="ChEBI" id="CHEBI:18420"/>
        <label>2</label>
    </ligand>
</feature>
<feature type="binding site" evidence="1">
    <location>
        <position position="148"/>
    </location>
    <ligand>
        <name>Mg(2+)</name>
        <dbReference type="ChEBI" id="CHEBI:18420"/>
        <label>1</label>
    </ligand>
</feature>
<organism>
    <name type="scientific">Mannheimia succiniciproducens (strain KCTC 0769BP / MBEL55E)</name>
    <dbReference type="NCBI Taxonomy" id="221988"/>
    <lineage>
        <taxon>Bacteria</taxon>
        <taxon>Pseudomonadati</taxon>
        <taxon>Pseudomonadota</taxon>
        <taxon>Gammaproteobacteria</taxon>
        <taxon>Pasteurellales</taxon>
        <taxon>Pasteurellaceae</taxon>
        <taxon>Basfia</taxon>
    </lineage>
</organism>
<sequence length="199" mass="21914">MFALFIWSFMAIILGIDPGSRVTGYGIIRQTGRTLEYLGSGAIRTQVEDLPTRLKRIYAGVTEIITQFRPDMFAIEEVFLAKNPNSALKLGQARGTAIVAAVNQNLPVFEYAARLVKQTVTGSGSADKVQVQDMVTRILRLSDKPQADAADALAIAITHAHTIQHSLQVATSAKSTENHEKTTALLRTRYSRGRFRLKI</sequence>
<protein>
    <recommendedName>
        <fullName evidence="1">Crossover junction endodeoxyribonuclease RuvC</fullName>
        <ecNumber evidence="1">3.1.21.10</ecNumber>
    </recommendedName>
    <alternativeName>
        <fullName evidence="1">Holliday junction nuclease RuvC</fullName>
    </alternativeName>
    <alternativeName>
        <fullName evidence="1">Holliday junction resolvase RuvC</fullName>
    </alternativeName>
</protein>
<keyword id="KW-0963">Cytoplasm</keyword>
<keyword id="KW-0227">DNA damage</keyword>
<keyword id="KW-0233">DNA recombination</keyword>
<keyword id="KW-0234">DNA repair</keyword>
<keyword id="KW-0238">DNA-binding</keyword>
<keyword id="KW-0255">Endonuclease</keyword>
<keyword id="KW-0378">Hydrolase</keyword>
<keyword id="KW-0460">Magnesium</keyword>
<keyword id="KW-0479">Metal-binding</keyword>
<keyword id="KW-0540">Nuclease</keyword>
<accession>Q65UP2</accession>
<name>RUVC_MANSM</name>
<dbReference type="EC" id="3.1.21.10" evidence="1"/>
<dbReference type="EMBL" id="AE016827">
    <property type="protein sequence ID" value="AAU37318.1"/>
    <property type="molecule type" value="Genomic_DNA"/>
</dbReference>
<dbReference type="SMR" id="Q65UP2"/>
<dbReference type="STRING" id="221988.MS0711"/>
<dbReference type="KEGG" id="msu:MS0711"/>
<dbReference type="eggNOG" id="COG0817">
    <property type="taxonomic scope" value="Bacteria"/>
</dbReference>
<dbReference type="HOGENOM" id="CLU_091257_2_1_6"/>
<dbReference type="Proteomes" id="UP000000607">
    <property type="component" value="Chromosome"/>
</dbReference>
<dbReference type="GO" id="GO:0005737">
    <property type="term" value="C:cytoplasm"/>
    <property type="evidence" value="ECO:0007669"/>
    <property type="project" value="UniProtKB-SubCell"/>
</dbReference>
<dbReference type="GO" id="GO:0048476">
    <property type="term" value="C:Holliday junction resolvase complex"/>
    <property type="evidence" value="ECO:0007669"/>
    <property type="project" value="UniProtKB-UniRule"/>
</dbReference>
<dbReference type="GO" id="GO:0008821">
    <property type="term" value="F:crossover junction DNA endonuclease activity"/>
    <property type="evidence" value="ECO:0007669"/>
    <property type="project" value="UniProtKB-UniRule"/>
</dbReference>
<dbReference type="GO" id="GO:0003677">
    <property type="term" value="F:DNA binding"/>
    <property type="evidence" value="ECO:0007669"/>
    <property type="project" value="UniProtKB-KW"/>
</dbReference>
<dbReference type="GO" id="GO:0000287">
    <property type="term" value="F:magnesium ion binding"/>
    <property type="evidence" value="ECO:0007669"/>
    <property type="project" value="UniProtKB-UniRule"/>
</dbReference>
<dbReference type="GO" id="GO:0006310">
    <property type="term" value="P:DNA recombination"/>
    <property type="evidence" value="ECO:0007669"/>
    <property type="project" value="UniProtKB-UniRule"/>
</dbReference>
<dbReference type="GO" id="GO:0006281">
    <property type="term" value="P:DNA repair"/>
    <property type="evidence" value="ECO:0007669"/>
    <property type="project" value="UniProtKB-UniRule"/>
</dbReference>
<dbReference type="CDD" id="cd16962">
    <property type="entry name" value="RuvC"/>
    <property type="match status" value="1"/>
</dbReference>
<dbReference type="FunFam" id="3.30.420.10:FF:000002">
    <property type="entry name" value="Crossover junction endodeoxyribonuclease RuvC"/>
    <property type="match status" value="1"/>
</dbReference>
<dbReference type="Gene3D" id="3.30.420.10">
    <property type="entry name" value="Ribonuclease H-like superfamily/Ribonuclease H"/>
    <property type="match status" value="1"/>
</dbReference>
<dbReference type="HAMAP" id="MF_00034">
    <property type="entry name" value="RuvC"/>
    <property type="match status" value="1"/>
</dbReference>
<dbReference type="InterPro" id="IPR012337">
    <property type="entry name" value="RNaseH-like_sf"/>
</dbReference>
<dbReference type="InterPro" id="IPR036397">
    <property type="entry name" value="RNaseH_sf"/>
</dbReference>
<dbReference type="InterPro" id="IPR020563">
    <property type="entry name" value="X-over_junc_endoDNase_Mg_BS"/>
</dbReference>
<dbReference type="InterPro" id="IPR002176">
    <property type="entry name" value="X-over_junc_endoDNase_RuvC"/>
</dbReference>
<dbReference type="NCBIfam" id="TIGR00228">
    <property type="entry name" value="ruvC"/>
    <property type="match status" value="1"/>
</dbReference>
<dbReference type="PANTHER" id="PTHR30194">
    <property type="entry name" value="CROSSOVER JUNCTION ENDODEOXYRIBONUCLEASE RUVC"/>
    <property type="match status" value="1"/>
</dbReference>
<dbReference type="PANTHER" id="PTHR30194:SF3">
    <property type="entry name" value="CROSSOVER JUNCTION ENDODEOXYRIBONUCLEASE RUVC"/>
    <property type="match status" value="1"/>
</dbReference>
<dbReference type="Pfam" id="PF02075">
    <property type="entry name" value="RuvC"/>
    <property type="match status" value="1"/>
</dbReference>
<dbReference type="PRINTS" id="PR00696">
    <property type="entry name" value="RSOLVASERUVC"/>
</dbReference>
<dbReference type="SUPFAM" id="SSF53098">
    <property type="entry name" value="Ribonuclease H-like"/>
    <property type="match status" value="1"/>
</dbReference>
<dbReference type="PROSITE" id="PS01321">
    <property type="entry name" value="RUVC"/>
    <property type="match status" value="1"/>
</dbReference>